<sequence length="177" mass="18568">MLDAFSRVVTNADAKAAYVGGADLQALKKFISEGNKRLDAVNSVVSNASCIVSDAVSGMICENPSLISPSGNCYTNRRMAACLRDGEIILRYVSYALLSGDSSVLEDRCLNGLKETYSSLGVPANSNARAVSIMKACAVAFINNTASQRKLSTPQGDCSGLASECASYFDKVTAAIS</sequence>
<accession>P17243</accession>
<evidence type="ECO:0000250" key="1"/>
<evidence type="ECO:0000305" key="2"/>
<proteinExistence type="inferred from homology"/>
<keyword id="KW-0089">Bile pigment</keyword>
<keyword id="KW-0150">Chloroplast</keyword>
<keyword id="KW-0157">Chromophore</keyword>
<keyword id="KW-0249">Electron transport</keyword>
<keyword id="KW-0472">Membrane</keyword>
<keyword id="KW-0488">Methylation</keyword>
<keyword id="KW-0602">Photosynthesis</keyword>
<keyword id="KW-0934">Plastid</keyword>
<keyword id="KW-0793">Thylakoid</keyword>
<keyword id="KW-0813">Transport</keyword>
<organism>
    <name type="scientific">Guillardia theta</name>
    <name type="common">Cryptophyte</name>
    <name type="synonym">Cryptomonas phi</name>
    <dbReference type="NCBI Taxonomy" id="55529"/>
    <lineage>
        <taxon>Eukaryota</taxon>
        <taxon>Cryptophyceae</taxon>
        <taxon>Pyrenomonadales</taxon>
        <taxon>Geminigeraceae</taxon>
        <taxon>Guillardia</taxon>
    </lineage>
</organism>
<dbReference type="EMBL" id="AF041468">
    <property type="protein sequence ID" value="AAC35631.1"/>
    <property type="molecule type" value="Genomic_DNA"/>
</dbReference>
<dbReference type="EMBL" id="X52159">
    <property type="protein sequence ID" value="CAA36412.1"/>
    <property type="molecule type" value="Genomic_DNA"/>
</dbReference>
<dbReference type="RefSeq" id="NP_050697.1">
    <property type="nucleotide sequence ID" value="NC_000926.1"/>
</dbReference>
<dbReference type="SMR" id="P17243"/>
<dbReference type="GeneID" id="856988"/>
<dbReference type="HOGENOM" id="CLU_104219_0_0_1"/>
<dbReference type="OMA" id="CYPTRRM"/>
<dbReference type="GO" id="GO:0009535">
    <property type="term" value="C:chloroplast thylakoid membrane"/>
    <property type="evidence" value="ECO:0007669"/>
    <property type="project" value="UniProtKB-SubCell"/>
</dbReference>
<dbReference type="GO" id="GO:0030089">
    <property type="term" value="C:phycobilisome"/>
    <property type="evidence" value="ECO:0007669"/>
    <property type="project" value="InterPro"/>
</dbReference>
<dbReference type="GO" id="GO:0015979">
    <property type="term" value="P:photosynthesis"/>
    <property type="evidence" value="ECO:0007669"/>
    <property type="project" value="UniProtKB-KW"/>
</dbReference>
<dbReference type="CDD" id="cd14767">
    <property type="entry name" value="PE_beta-like"/>
    <property type="match status" value="1"/>
</dbReference>
<dbReference type="Gene3D" id="1.10.490.20">
    <property type="entry name" value="Phycocyanins"/>
    <property type="match status" value="1"/>
</dbReference>
<dbReference type="InterPro" id="IPR009050">
    <property type="entry name" value="Globin-like_sf"/>
</dbReference>
<dbReference type="InterPro" id="IPR012128">
    <property type="entry name" value="Phycobilisome_asu/bsu"/>
</dbReference>
<dbReference type="InterPro" id="IPR038719">
    <property type="entry name" value="Phycobilisome_asu/bsu_sf"/>
</dbReference>
<dbReference type="PANTHER" id="PTHR34011:SF7">
    <property type="entry name" value="C-PHYCOCYANIN BETA SUBUNIT"/>
    <property type="match status" value="1"/>
</dbReference>
<dbReference type="PANTHER" id="PTHR34011">
    <property type="entry name" value="PHYCOBILISOME 32.1 KDA LINKER POLYPEPTIDE, PHYCOCYANIN-ASSOCIATED, ROD 2-RELATED"/>
    <property type="match status" value="1"/>
</dbReference>
<dbReference type="Pfam" id="PF00502">
    <property type="entry name" value="Phycobilisome"/>
    <property type="match status" value="1"/>
</dbReference>
<dbReference type="PIRSF" id="PIRSF000081">
    <property type="entry name" value="Phycocyanin"/>
    <property type="match status" value="1"/>
</dbReference>
<dbReference type="SUPFAM" id="SSF46458">
    <property type="entry name" value="Globin-like"/>
    <property type="match status" value="1"/>
</dbReference>
<protein>
    <recommendedName>
        <fullName>B-phycoerythrin beta chain</fullName>
    </recommendedName>
</protein>
<feature type="chain" id="PRO_0000199192" description="B-phycoerythrin beta chain">
    <location>
        <begin position="1"/>
        <end position="177"/>
    </location>
</feature>
<feature type="binding site" description="covalent" evidence="1">
    <location>
        <position position="50"/>
    </location>
    <ligand>
        <name>(2R,3E)-phycoerythrobilin</name>
        <dbReference type="ChEBI" id="CHEBI:85276"/>
        <label>1</label>
    </ligand>
</feature>
<feature type="binding site" description="covalent" evidence="1">
    <location>
        <position position="61"/>
    </location>
    <ligand>
        <name>(2R,3E)-phycoerythrobilin</name>
        <dbReference type="ChEBI" id="CHEBI:85276"/>
        <label>1</label>
    </ligand>
</feature>
<feature type="binding site" description="covalent" evidence="1">
    <location>
        <position position="82"/>
    </location>
    <ligand>
        <name>(2R,3E)-phycoerythrobilin</name>
        <dbReference type="ChEBI" id="CHEBI:85276"/>
        <label>2</label>
    </ligand>
</feature>
<feature type="binding site" description="covalent" evidence="1">
    <location>
        <position position="158"/>
    </location>
    <ligand>
        <name>(2R,3E)-phycoerythrobilin</name>
        <dbReference type="ChEBI" id="CHEBI:85276"/>
        <label>3</label>
    </ligand>
</feature>
<feature type="modified residue" description="N4-methylasparagine" evidence="1">
    <location>
        <position position="72"/>
    </location>
</feature>
<name>PHEB_GUITH</name>
<gene>
    <name type="primary">cpeB</name>
</gene>
<geneLocation type="chloroplast"/>
<reference key="1">
    <citation type="journal article" date="1990" name="Plant Mol. Biol.">
        <title>Localization of beta-phycoerythrin to the thylakoid lumen of Cryptomonas phi does not involve a signal peptide.</title>
        <authorList>
            <person name="Reith M."/>
            <person name="Douglas S.E."/>
        </authorList>
    </citation>
    <scope>NUCLEOTIDE SEQUENCE [GENOMIC DNA]</scope>
</reference>
<comment type="function">
    <text>Light-harvesting photosynthetic bile pigment-protein from the phycobiliprotein complex.</text>
</comment>
<comment type="subunit">
    <text>Heterotetramer of one alpha-1, one alpha-2, and two beta chains.</text>
</comment>
<comment type="subcellular location">
    <subcellularLocation>
        <location>Plastid</location>
        <location>Chloroplast thylakoid membrane</location>
        <topology>Peripheral membrane protein</topology>
        <orientation>Lumenal side</orientation>
    </subcellularLocation>
</comment>
<comment type="PTM">
    <text evidence="1">Contains three covalently linked bilin chromophores.</text>
</comment>
<comment type="miscellaneous">
    <text>The light-harvesting system in Cryptophytes contains phycobiliprotein complexes. Unusually they are composed of either phycoerythrin (CPE) or phycocyanin (CPC) but never allophycocyanin (APC), with only one type of biliprotein being present in any one species. Unlike cyanobacteria or red algae these proteins are not arranged into higher-order phycobilisome complexes, and they are found in the thylakoid lumen.</text>
</comment>
<comment type="similarity">
    <text evidence="2">Belongs to the phycobiliprotein family.</text>
</comment>